<sequence>MSVQEHKQEAPDIVRCKVITVSDTRTDETDKSGKLMISFLEEAGHHIAAYEIVKDEKDALQRSVLAGCMDEQTDAVLLNGGTGIADRDVTIEAITPLFSKELPGFGEIFRMLSYTEDIGSAAIMSRATAGVIQHTAVFSTPGSSGAVKLAMNKLIIPELAHVVREIRKDK</sequence>
<accession>O34457</accession>
<protein>
    <recommendedName>
        <fullName>Molybdenum cofactor biosynthesis protein B</fullName>
    </recommendedName>
</protein>
<gene>
    <name type="primary">moaB</name>
    <name type="ordered locus">BSU29460</name>
</gene>
<reference key="1">
    <citation type="journal article" date="1997" name="Microbiology">
        <title>Sequencing and functional annotation of the Bacillus subtilis genes in the 200 kb rrnB-dnaB region.</title>
        <authorList>
            <person name="Lapidus A."/>
            <person name="Galleron N."/>
            <person name="Sorokin A."/>
            <person name="Ehrlich S.D."/>
        </authorList>
    </citation>
    <scope>NUCLEOTIDE SEQUENCE [GENOMIC DNA]</scope>
    <source>
        <strain>168</strain>
    </source>
</reference>
<reference key="2">
    <citation type="journal article" date="1997" name="Nature">
        <title>The complete genome sequence of the Gram-positive bacterium Bacillus subtilis.</title>
        <authorList>
            <person name="Kunst F."/>
            <person name="Ogasawara N."/>
            <person name="Moszer I."/>
            <person name="Albertini A.M."/>
            <person name="Alloni G."/>
            <person name="Azevedo V."/>
            <person name="Bertero M.G."/>
            <person name="Bessieres P."/>
            <person name="Bolotin A."/>
            <person name="Borchert S."/>
            <person name="Borriss R."/>
            <person name="Boursier L."/>
            <person name="Brans A."/>
            <person name="Braun M."/>
            <person name="Brignell S.C."/>
            <person name="Bron S."/>
            <person name="Brouillet S."/>
            <person name="Bruschi C.V."/>
            <person name="Caldwell B."/>
            <person name="Capuano V."/>
            <person name="Carter N.M."/>
            <person name="Choi S.-K."/>
            <person name="Codani J.-J."/>
            <person name="Connerton I.F."/>
            <person name="Cummings N.J."/>
            <person name="Daniel R.A."/>
            <person name="Denizot F."/>
            <person name="Devine K.M."/>
            <person name="Duesterhoeft A."/>
            <person name="Ehrlich S.D."/>
            <person name="Emmerson P.T."/>
            <person name="Entian K.-D."/>
            <person name="Errington J."/>
            <person name="Fabret C."/>
            <person name="Ferrari E."/>
            <person name="Foulger D."/>
            <person name="Fritz C."/>
            <person name="Fujita M."/>
            <person name="Fujita Y."/>
            <person name="Fuma S."/>
            <person name="Galizzi A."/>
            <person name="Galleron N."/>
            <person name="Ghim S.-Y."/>
            <person name="Glaser P."/>
            <person name="Goffeau A."/>
            <person name="Golightly E.J."/>
            <person name="Grandi G."/>
            <person name="Guiseppi G."/>
            <person name="Guy B.J."/>
            <person name="Haga K."/>
            <person name="Haiech J."/>
            <person name="Harwood C.R."/>
            <person name="Henaut A."/>
            <person name="Hilbert H."/>
            <person name="Holsappel S."/>
            <person name="Hosono S."/>
            <person name="Hullo M.-F."/>
            <person name="Itaya M."/>
            <person name="Jones L.-M."/>
            <person name="Joris B."/>
            <person name="Karamata D."/>
            <person name="Kasahara Y."/>
            <person name="Klaerr-Blanchard M."/>
            <person name="Klein C."/>
            <person name="Kobayashi Y."/>
            <person name="Koetter P."/>
            <person name="Koningstein G."/>
            <person name="Krogh S."/>
            <person name="Kumano M."/>
            <person name="Kurita K."/>
            <person name="Lapidus A."/>
            <person name="Lardinois S."/>
            <person name="Lauber J."/>
            <person name="Lazarevic V."/>
            <person name="Lee S.-M."/>
            <person name="Levine A."/>
            <person name="Liu H."/>
            <person name="Masuda S."/>
            <person name="Mauel C."/>
            <person name="Medigue C."/>
            <person name="Medina N."/>
            <person name="Mellado R.P."/>
            <person name="Mizuno M."/>
            <person name="Moestl D."/>
            <person name="Nakai S."/>
            <person name="Noback M."/>
            <person name="Noone D."/>
            <person name="O'Reilly M."/>
            <person name="Ogawa K."/>
            <person name="Ogiwara A."/>
            <person name="Oudega B."/>
            <person name="Park S.-H."/>
            <person name="Parro V."/>
            <person name="Pohl T.M."/>
            <person name="Portetelle D."/>
            <person name="Porwollik S."/>
            <person name="Prescott A.M."/>
            <person name="Presecan E."/>
            <person name="Pujic P."/>
            <person name="Purnelle B."/>
            <person name="Rapoport G."/>
            <person name="Rey M."/>
            <person name="Reynolds S."/>
            <person name="Rieger M."/>
            <person name="Rivolta C."/>
            <person name="Rocha E."/>
            <person name="Roche B."/>
            <person name="Rose M."/>
            <person name="Sadaie Y."/>
            <person name="Sato T."/>
            <person name="Scanlan E."/>
            <person name="Schleich S."/>
            <person name="Schroeter R."/>
            <person name="Scoffone F."/>
            <person name="Sekiguchi J."/>
            <person name="Sekowska A."/>
            <person name="Seror S.J."/>
            <person name="Serror P."/>
            <person name="Shin B.-S."/>
            <person name="Soldo B."/>
            <person name="Sorokin A."/>
            <person name="Tacconi E."/>
            <person name="Takagi T."/>
            <person name="Takahashi H."/>
            <person name="Takemaru K."/>
            <person name="Takeuchi M."/>
            <person name="Tamakoshi A."/>
            <person name="Tanaka T."/>
            <person name="Terpstra P."/>
            <person name="Tognoni A."/>
            <person name="Tosato V."/>
            <person name="Uchiyama S."/>
            <person name="Vandenbol M."/>
            <person name="Vannier F."/>
            <person name="Vassarotti A."/>
            <person name="Viari A."/>
            <person name="Wambutt R."/>
            <person name="Wedler E."/>
            <person name="Wedler H."/>
            <person name="Weitzenegger T."/>
            <person name="Winters P."/>
            <person name="Wipat A."/>
            <person name="Yamamoto H."/>
            <person name="Yamane K."/>
            <person name="Yasumoto K."/>
            <person name="Yata K."/>
            <person name="Yoshida K."/>
            <person name="Yoshikawa H.-F."/>
            <person name="Zumstein E."/>
            <person name="Yoshikawa H."/>
            <person name="Danchin A."/>
        </authorList>
    </citation>
    <scope>NUCLEOTIDE SEQUENCE [LARGE SCALE GENOMIC DNA]</scope>
    <source>
        <strain>168</strain>
    </source>
</reference>
<comment type="function">
    <text evidence="1">May be involved in the biosynthesis of molybdopterin.</text>
</comment>
<comment type="pathway">
    <text>Cofactor biosynthesis; molybdopterin biosynthesis.</text>
</comment>
<comment type="similarity">
    <text evidence="2">Belongs to the MoaB/Mog family.</text>
</comment>
<proteinExistence type="inferred from homology"/>
<keyword id="KW-0501">Molybdenum cofactor biosynthesis</keyword>
<keyword id="KW-1185">Reference proteome</keyword>
<feature type="chain" id="PRO_0000170969" description="Molybdenum cofactor biosynthesis protein B">
    <location>
        <begin position="1"/>
        <end position="170"/>
    </location>
</feature>
<organism>
    <name type="scientific">Bacillus subtilis (strain 168)</name>
    <dbReference type="NCBI Taxonomy" id="224308"/>
    <lineage>
        <taxon>Bacteria</taxon>
        <taxon>Bacillati</taxon>
        <taxon>Bacillota</taxon>
        <taxon>Bacilli</taxon>
        <taxon>Bacillales</taxon>
        <taxon>Bacillaceae</taxon>
        <taxon>Bacillus</taxon>
    </lineage>
</organism>
<name>MOAB_BACSU</name>
<dbReference type="EMBL" id="AF008220">
    <property type="protein sequence ID" value="AAC00319.1"/>
    <property type="molecule type" value="Genomic_DNA"/>
</dbReference>
<dbReference type="EMBL" id="AL009126">
    <property type="protein sequence ID" value="CAB14924.1"/>
    <property type="molecule type" value="Genomic_DNA"/>
</dbReference>
<dbReference type="PIR" id="H69658">
    <property type="entry name" value="H69658"/>
</dbReference>
<dbReference type="RefSeq" id="NP_390824.1">
    <property type="nucleotide sequence ID" value="NC_000964.3"/>
</dbReference>
<dbReference type="RefSeq" id="WP_004398479.1">
    <property type="nucleotide sequence ID" value="NZ_OZ025638.1"/>
</dbReference>
<dbReference type="SMR" id="O34457"/>
<dbReference type="FunCoup" id="O34457">
    <property type="interactions" value="633"/>
</dbReference>
<dbReference type="STRING" id="224308.BSU29460"/>
<dbReference type="PaxDb" id="224308-BSU29460"/>
<dbReference type="EnsemblBacteria" id="CAB14924">
    <property type="protein sequence ID" value="CAB14924"/>
    <property type="gene ID" value="BSU_29460"/>
</dbReference>
<dbReference type="GeneID" id="937349"/>
<dbReference type="KEGG" id="bsu:BSU29460"/>
<dbReference type="PATRIC" id="fig|224308.179.peg.3200"/>
<dbReference type="eggNOG" id="COG0521">
    <property type="taxonomic scope" value="Bacteria"/>
</dbReference>
<dbReference type="InParanoid" id="O34457"/>
<dbReference type="OrthoDB" id="9784492at2"/>
<dbReference type="PhylomeDB" id="O34457"/>
<dbReference type="BioCyc" id="BSUB:BSU29460-MONOMER"/>
<dbReference type="UniPathway" id="UPA00344"/>
<dbReference type="Proteomes" id="UP000001570">
    <property type="component" value="Chromosome"/>
</dbReference>
<dbReference type="GO" id="GO:0005829">
    <property type="term" value="C:cytosol"/>
    <property type="evidence" value="ECO:0000318"/>
    <property type="project" value="GO_Central"/>
</dbReference>
<dbReference type="GO" id="GO:0006777">
    <property type="term" value="P:Mo-molybdopterin cofactor biosynthetic process"/>
    <property type="evidence" value="ECO:0007669"/>
    <property type="project" value="UniProtKB-KW"/>
</dbReference>
<dbReference type="CDD" id="cd00886">
    <property type="entry name" value="MogA_MoaB"/>
    <property type="match status" value="1"/>
</dbReference>
<dbReference type="FunFam" id="3.40.980.10:FF:000006">
    <property type="entry name" value="Molybdenum cofactor biosynthesis protein B"/>
    <property type="match status" value="1"/>
</dbReference>
<dbReference type="Gene3D" id="3.40.980.10">
    <property type="entry name" value="MoaB/Mog-like domain"/>
    <property type="match status" value="1"/>
</dbReference>
<dbReference type="InterPro" id="IPR012245">
    <property type="entry name" value="MoaB"/>
</dbReference>
<dbReference type="InterPro" id="IPR036425">
    <property type="entry name" value="MoaB/Mog-like_dom_sf"/>
</dbReference>
<dbReference type="InterPro" id="IPR001453">
    <property type="entry name" value="MoaB/Mog_dom"/>
</dbReference>
<dbReference type="InterPro" id="IPR008284">
    <property type="entry name" value="MoCF_biosynth_CS"/>
</dbReference>
<dbReference type="NCBIfam" id="TIGR00177">
    <property type="entry name" value="molyb_syn"/>
    <property type="match status" value="1"/>
</dbReference>
<dbReference type="PANTHER" id="PTHR43232">
    <property type="entry name" value="MOLYBDENUM COFACTOR BIOSYNTHESIS PROTEIN B"/>
    <property type="match status" value="1"/>
</dbReference>
<dbReference type="PANTHER" id="PTHR43232:SF2">
    <property type="entry name" value="MOLYBDENUM COFACTOR BIOSYNTHESIS PROTEIN B"/>
    <property type="match status" value="1"/>
</dbReference>
<dbReference type="Pfam" id="PF00994">
    <property type="entry name" value="MoCF_biosynth"/>
    <property type="match status" value="1"/>
</dbReference>
<dbReference type="PIRSF" id="PIRSF006443">
    <property type="entry name" value="MoaB"/>
    <property type="match status" value="1"/>
</dbReference>
<dbReference type="SMART" id="SM00852">
    <property type="entry name" value="MoCF_biosynth"/>
    <property type="match status" value="1"/>
</dbReference>
<dbReference type="SUPFAM" id="SSF53218">
    <property type="entry name" value="Molybdenum cofactor biosynthesis proteins"/>
    <property type="match status" value="1"/>
</dbReference>
<dbReference type="PROSITE" id="PS01078">
    <property type="entry name" value="MOCF_BIOSYNTHESIS_1"/>
    <property type="match status" value="1"/>
</dbReference>
<evidence type="ECO:0000250" key="1"/>
<evidence type="ECO:0000305" key="2"/>